<dbReference type="EMBL" id="CP000768">
    <property type="protein sequence ID" value="ABS44196.1"/>
    <property type="molecule type" value="Genomic_DNA"/>
</dbReference>
<dbReference type="SMR" id="A7H5U4"/>
<dbReference type="KEGG" id="cjd:JJD26997_1947"/>
<dbReference type="HOGENOM" id="CLU_092403_0_2_7"/>
<dbReference type="Proteomes" id="UP000002302">
    <property type="component" value="Chromosome"/>
</dbReference>
<dbReference type="GO" id="GO:0015935">
    <property type="term" value="C:small ribosomal subunit"/>
    <property type="evidence" value="ECO:0007669"/>
    <property type="project" value="InterPro"/>
</dbReference>
<dbReference type="GO" id="GO:0019843">
    <property type="term" value="F:rRNA binding"/>
    <property type="evidence" value="ECO:0007669"/>
    <property type="project" value="UniProtKB-UniRule"/>
</dbReference>
<dbReference type="GO" id="GO:0003735">
    <property type="term" value="F:structural constituent of ribosome"/>
    <property type="evidence" value="ECO:0007669"/>
    <property type="project" value="InterPro"/>
</dbReference>
<dbReference type="GO" id="GO:0042274">
    <property type="term" value="P:ribosomal small subunit biogenesis"/>
    <property type="evidence" value="ECO:0007669"/>
    <property type="project" value="TreeGrafter"/>
</dbReference>
<dbReference type="GO" id="GO:0006412">
    <property type="term" value="P:translation"/>
    <property type="evidence" value="ECO:0007669"/>
    <property type="project" value="UniProtKB-UniRule"/>
</dbReference>
<dbReference type="CDD" id="cd00165">
    <property type="entry name" value="S4"/>
    <property type="match status" value="1"/>
</dbReference>
<dbReference type="FunFam" id="1.10.1050.10:FF:000001">
    <property type="entry name" value="30S ribosomal protein S4"/>
    <property type="match status" value="1"/>
</dbReference>
<dbReference type="FunFam" id="3.10.290.10:FF:000001">
    <property type="entry name" value="30S ribosomal protein S4"/>
    <property type="match status" value="1"/>
</dbReference>
<dbReference type="Gene3D" id="1.10.1050.10">
    <property type="entry name" value="Ribosomal Protein S4 Delta 41, Chain A, domain 1"/>
    <property type="match status" value="1"/>
</dbReference>
<dbReference type="Gene3D" id="3.10.290.10">
    <property type="entry name" value="RNA-binding S4 domain"/>
    <property type="match status" value="1"/>
</dbReference>
<dbReference type="HAMAP" id="MF_01306_B">
    <property type="entry name" value="Ribosomal_uS4_B"/>
    <property type="match status" value="1"/>
</dbReference>
<dbReference type="InterPro" id="IPR022801">
    <property type="entry name" value="Ribosomal_uS4"/>
</dbReference>
<dbReference type="InterPro" id="IPR005709">
    <property type="entry name" value="Ribosomal_uS4_bac-type"/>
</dbReference>
<dbReference type="InterPro" id="IPR018079">
    <property type="entry name" value="Ribosomal_uS4_CS"/>
</dbReference>
<dbReference type="InterPro" id="IPR001912">
    <property type="entry name" value="Ribosomal_uS4_N"/>
</dbReference>
<dbReference type="InterPro" id="IPR002942">
    <property type="entry name" value="S4_RNA-bd"/>
</dbReference>
<dbReference type="InterPro" id="IPR036986">
    <property type="entry name" value="S4_RNA-bd_sf"/>
</dbReference>
<dbReference type="NCBIfam" id="NF003717">
    <property type="entry name" value="PRK05327.1"/>
    <property type="match status" value="1"/>
</dbReference>
<dbReference type="NCBIfam" id="TIGR01017">
    <property type="entry name" value="rpsD_bact"/>
    <property type="match status" value="1"/>
</dbReference>
<dbReference type="PANTHER" id="PTHR11831">
    <property type="entry name" value="30S 40S RIBOSOMAL PROTEIN"/>
    <property type="match status" value="1"/>
</dbReference>
<dbReference type="PANTHER" id="PTHR11831:SF4">
    <property type="entry name" value="SMALL RIBOSOMAL SUBUNIT PROTEIN US4M"/>
    <property type="match status" value="1"/>
</dbReference>
<dbReference type="Pfam" id="PF00163">
    <property type="entry name" value="Ribosomal_S4"/>
    <property type="match status" value="1"/>
</dbReference>
<dbReference type="Pfam" id="PF01479">
    <property type="entry name" value="S4"/>
    <property type="match status" value="1"/>
</dbReference>
<dbReference type="SMART" id="SM01390">
    <property type="entry name" value="Ribosomal_S4"/>
    <property type="match status" value="1"/>
</dbReference>
<dbReference type="SMART" id="SM00363">
    <property type="entry name" value="S4"/>
    <property type="match status" value="1"/>
</dbReference>
<dbReference type="SUPFAM" id="SSF55174">
    <property type="entry name" value="Alpha-L RNA-binding motif"/>
    <property type="match status" value="1"/>
</dbReference>
<dbReference type="PROSITE" id="PS00632">
    <property type="entry name" value="RIBOSOMAL_S4"/>
    <property type="match status" value="1"/>
</dbReference>
<dbReference type="PROSITE" id="PS50889">
    <property type="entry name" value="S4"/>
    <property type="match status" value="1"/>
</dbReference>
<gene>
    <name evidence="1" type="primary">rpsD</name>
    <name type="ordered locus">JJD26997_1947</name>
</gene>
<reference key="1">
    <citation type="submission" date="2007-07" db="EMBL/GenBank/DDBJ databases">
        <title>Complete genome sequence of Campylobacter jejuni subsp doylei 269.97 isolated from human blood.</title>
        <authorList>
            <person name="Fouts D.E."/>
            <person name="Mongodin E.F."/>
            <person name="Puiu D."/>
            <person name="Sebastian Y."/>
            <person name="Miller W.G."/>
            <person name="Mandrell R.E."/>
            <person name="Lastovica A.J."/>
            <person name="Nelson K.E."/>
        </authorList>
    </citation>
    <scope>NUCLEOTIDE SEQUENCE [LARGE SCALE GENOMIC DNA]</scope>
    <source>
        <strain>ATCC BAA-1458 / RM4099 / 269.97</strain>
    </source>
</reference>
<protein>
    <recommendedName>
        <fullName evidence="1">Small ribosomal subunit protein uS4</fullName>
    </recommendedName>
    <alternativeName>
        <fullName evidence="2">30S ribosomal protein S4</fullName>
    </alternativeName>
</protein>
<proteinExistence type="inferred from homology"/>
<sequence length="208" mass="23896">MARYRGPVEKLERRFGVSLALKGERRLAGKSALDKRPYAPGQHGARKGKISEYGLQLREKQKAKFMYGVSEKQFRRLFAEAARREGNTGVLLIQLLEQRLDNVVYRMGFATTRRFARQLVTHGHVLVNGKRVDIPSFRVEAGAKIEIIEKSKNNPQITRAIELTAQTGIVAWVDVEKDKRFGIFTRKPEREEVVIPVEERFIVELYSK</sequence>
<organism>
    <name type="scientific">Campylobacter jejuni subsp. doylei (strain ATCC BAA-1458 / RM4099 / 269.97)</name>
    <dbReference type="NCBI Taxonomy" id="360109"/>
    <lineage>
        <taxon>Bacteria</taxon>
        <taxon>Pseudomonadati</taxon>
        <taxon>Campylobacterota</taxon>
        <taxon>Epsilonproteobacteria</taxon>
        <taxon>Campylobacterales</taxon>
        <taxon>Campylobacteraceae</taxon>
        <taxon>Campylobacter</taxon>
    </lineage>
</organism>
<feature type="chain" id="PRO_0000322282" description="Small ribosomal subunit protein uS4">
    <location>
        <begin position="1"/>
        <end position="208"/>
    </location>
</feature>
<feature type="domain" description="S4 RNA-binding" evidence="1">
    <location>
        <begin position="98"/>
        <end position="163"/>
    </location>
</feature>
<comment type="function">
    <text evidence="1">One of the primary rRNA binding proteins, it binds directly to 16S rRNA where it nucleates assembly of the body of the 30S subunit.</text>
</comment>
<comment type="function">
    <text evidence="1">With S5 and S12 plays an important role in translational accuracy.</text>
</comment>
<comment type="subunit">
    <text evidence="1">Part of the 30S ribosomal subunit. Contacts protein S5. The interaction surface between S4 and S5 is involved in control of translational fidelity.</text>
</comment>
<comment type="similarity">
    <text evidence="1">Belongs to the universal ribosomal protein uS4 family.</text>
</comment>
<name>RS4_CAMJD</name>
<accession>A7H5U4</accession>
<evidence type="ECO:0000255" key="1">
    <source>
        <dbReference type="HAMAP-Rule" id="MF_01306"/>
    </source>
</evidence>
<evidence type="ECO:0000305" key="2"/>
<keyword id="KW-0687">Ribonucleoprotein</keyword>
<keyword id="KW-0689">Ribosomal protein</keyword>
<keyword id="KW-0694">RNA-binding</keyword>
<keyword id="KW-0699">rRNA-binding</keyword>